<comment type="function">
    <text evidence="1">Binds the lower part of the 30S subunit head. Binds mRNA in the 70S ribosome, positioning it for translation.</text>
</comment>
<comment type="subunit">
    <text evidence="1">Part of the 30S ribosomal subunit. Forms a tight complex with proteins S10 and S14.</text>
</comment>
<comment type="similarity">
    <text evidence="1">Belongs to the universal ribosomal protein uS3 family.</text>
</comment>
<feature type="chain" id="PRO_0000293784" description="Small ribosomal subunit protein uS3">
    <location>
        <begin position="1"/>
        <end position="211"/>
    </location>
</feature>
<feature type="domain" description="KH type-2" evidence="1">
    <location>
        <begin position="38"/>
        <end position="106"/>
    </location>
</feature>
<organism>
    <name type="scientific">Ehrlichia chaffeensis (strain ATCC CRL-10679 / Arkansas)</name>
    <dbReference type="NCBI Taxonomy" id="205920"/>
    <lineage>
        <taxon>Bacteria</taxon>
        <taxon>Pseudomonadati</taxon>
        <taxon>Pseudomonadota</taxon>
        <taxon>Alphaproteobacteria</taxon>
        <taxon>Rickettsiales</taxon>
        <taxon>Anaplasmataceae</taxon>
        <taxon>Ehrlichia</taxon>
    </lineage>
</organism>
<protein>
    <recommendedName>
        <fullName evidence="1">Small ribosomal subunit protein uS3</fullName>
    </recommendedName>
    <alternativeName>
        <fullName evidence="2">30S ribosomal protein S3</fullName>
    </alternativeName>
</protein>
<evidence type="ECO:0000255" key="1">
    <source>
        <dbReference type="HAMAP-Rule" id="MF_01309"/>
    </source>
</evidence>
<evidence type="ECO:0000305" key="2"/>
<proteinExistence type="inferred from homology"/>
<gene>
    <name evidence="1" type="primary">rpsC</name>
    <name type="ordered locus">ECH_0415</name>
</gene>
<keyword id="KW-1185">Reference proteome</keyword>
<keyword id="KW-0687">Ribonucleoprotein</keyword>
<keyword id="KW-0689">Ribosomal protein</keyword>
<keyword id="KW-0694">RNA-binding</keyword>
<keyword id="KW-0699">rRNA-binding</keyword>
<dbReference type="EMBL" id="CP000236">
    <property type="protein sequence ID" value="ABD45551.1"/>
    <property type="molecule type" value="Genomic_DNA"/>
</dbReference>
<dbReference type="RefSeq" id="WP_011452582.1">
    <property type="nucleotide sequence ID" value="NC_007799.1"/>
</dbReference>
<dbReference type="SMR" id="Q2GH50"/>
<dbReference type="STRING" id="205920.ECH_0415"/>
<dbReference type="KEGG" id="ech:ECH_0415"/>
<dbReference type="eggNOG" id="COG0092">
    <property type="taxonomic scope" value="Bacteria"/>
</dbReference>
<dbReference type="HOGENOM" id="CLU_058591_0_2_5"/>
<dbReference type="OrthoDB" id="9806396at2"/>
<dbReference type="Proteomes" id="UP000008320">
    <property type="component" value="Chromosome"/>
</dbReference>
<dbReference type="GO" id="GO:0022627">
    <property type="term" value="C:cytosolic small ribosomal subunit"/>
    <property type="evidence" value="ECO:0007669"/>
    <property type="project" value="TreeGrafter"/>
</dbReference>
<dbReference type="GO" id="GO:0003729">
    <property type="term" value="F:mRNA binding"/>
    <property type="evidence" value="ECO:0007669"/>
    <property type="project" value="UniProtKB-UniRule"/>
</dbReference>
<dbReference type="GO" id="GO:0019843">
    <property type="term" value="F:rRNA binding"/>
    <property type="evidence" value="ECO:0007669"/>
    <property type="project" value="UniProtKB-UniRule"/>
</dbReference>
<dbReference type="GO" id="GO:0003735">
    <property type="term" value="F:structural constituent of ribosome"/>
    <property type="evidence" value="ECO:0007669"/>
    <property type="project" value="InterPro"/>
</dbReference>
<dbReference type="GO" id="GO:0006412">
    <property type="term" value="P:translation"/>
    <property type="evidence" value="ECO:0007669"/>
    <property type="project" value="UniProtKB-UniRule"/>
</dbReference>
<dbReference type="CDD" id="cd02412">
    <property type="entry name" value="KH-II_30S_S3"/>
    <property type="match status" value="1"/>
</dbReference>
<dbReference type="FunFam" id="3.30.1140.32:FF:000002">
    <property type="entry name" value="30S ribosomal protein S3"/>
    <property type="match status" value="1"/>
</dbReference>
<dbReference type="FunFam" id="3.30.300.20:FF:000001">
    <property type="entry name" value="30S ribosomal protein S3"/>
    <property type="match status" value="1"/>
</dbReference>
<dbReference type="Gene3D" id="3.30.300.20">
    <property type="match status" value="1"/>
</dbReference>
<dbReference type="Gene3D" id="3.30.1140.32">
    <property type="entry name" value="Ribosomal protein S3, C-terminal domain"/>
    <property type="match status" value="1"/>
</dbReference>
<dbReference type="HAMAP" id="MF_01309_B">
    <property type="entry name" value="Ribosomal_uS3_B"/>
    <property type="match status" value="1"/>
</dbReference>
<dbReference type="InterPro" id="IPR004087">
    <property type="entry name" value="KH_dom"/>
</dbReference>
<dbReference type="InterPro" id="IPR015946">
    <property type="entry name" value="KH_dom-like_a/b"/>
</dbReference>
<dbReference type="InterPro" id="IPR004044">
    <property type="entry name" value="KH_dom_type_2"/>
</dbReference>
<dbReference type="InterPro" id="IPR009019">
    <property type="entry name" value="KH_sf_prok-type"/>
</dbReference>
<dbReference type="InterPro" id="IPR036419">
    <property type="entry name" value="Ribosomal_S3_C_sf"/>
</dbReference>
<dbReference type="InterPro" id="IPR005704">
    <property type="entry name" value="Ribosomal_uS3_bac-typ"/>
</dbReference>
<dbReference type="InterPro" id="IPR001351">
    <property type="entry name" value="Ribosomal_uS3_C"/>
</dbReference>
<dbReference type="InterPro" id="IPR018280">
    <property type="entry name" value="Ribosomal_uS3_CS"/>
</dbReference>
<dbReference type="NCBIfam" id="TIGR01009">
    <property type="entry name" value="rpsC_bact"/>
    <property type="match status" value="1"/>
</dbReference>
<dbReference type="PANTHER" id="PTHR11760">
    <property type="entry name" value="30S/40S RIBOSOMAL PROTEIN S3"/>
    <property type="match status" value="1"/>
</dbReference>
<dbReference type="PANTHER" id="PTHR11760:SF19">
    <property type="entry name" value="SMALL RIBOSOMAL SUBUNIT PROTEIN US3C"/>
    <property type="match status" value="1"/>
</dbReference>
<dbReference type="Pfam" id="PF07650">
    <property type="entry name" value="KH_2"/>
    <property type="match status" value="1"/>
</dbReference>
<dbReference type="Pfam" id="PF00189">
    <property type="entry name" value="Ribosomal_S3_C"/>
    <property type="match status" value="1"/>
</dbReference>
<dbReference type="SMART" id="SM00322">
    <property type="entry name" value="KH"/>
    <property type="match status" value="1"/>
</dbReference>
<dbReference type="SUPFAM" id="SSF54814">
    <property type="entry name" value="Prokaryotic type KH domain (KH-domain type II)"/>
    <property type="match status" value="1"/>
</dbReference>
<dbReference type="SUPFAM" id="SSF54821">
    <property type="entry name" value="Ribosomal protein S3 C-terminal domain"/>
    <property type="match status" value="1"/>
</dbReference>
<dbReference type="PROSITE" id="PS50823">
    <property type="entry name" value="KH_TYPE_2"/>
    <property type="match status" value="1"/>
</dbReference>
<dbReference type="PROSITE" id="PS00548">
    <property type="entry name" value="RIBOSOMAL_S3"/>
    <property type="match status" value="1"/>
</dbReference>
<name>RS3_EHRCR</name>
<reference key="1">
    <citation type="journal article" date="2006" name="PLoS Genet.">
        <title>Comparative genomics of emerging human ehrlichiosis agents.</title>
        <authorList>
            <person name="Dunning Hotopp J.C."/>
            <person name="Lin M."/>
            <person name="Madupu R."/>
            <person name="Crabtree J."/>
            <person name="Angiuoli S.V."/>
            <person name="Eisen J.A."/>
            <person name="Seshadri R."/>
            <person name="Ren Q."/>
            <person name="Wu M."/>
            <person name="Utterback T.R."/>
            <person name="Smith S."/>
            <person name="Lewis M."/>
            <person name="Khouri H."/>
            <person name="Zhang C."/>
            <person name="Niu H."/>
            <person name="Lin Q."/>
            <person name="Ohashi N."/>
            <person name="Zhi N."/>
            <person name="Nelson W.C."/>
            <person name="Brinkac L.M."/>
            <person name="Dodson R.J."/>
            <person name="Rosovitz M.J."/>
            <person name="Sundaram J.P."/>
            <person name="Daugherty S.C."/>
            <person name="Davidsen T."/>
            <person name="Durkin A.S."/>
            <person name="Gwinn M.L."/>
            <person name="Haft D.H."/>
            <person name="Selengut J.D."/>
            <person name="Sullivan S.A."/>
            <person name="Zafar N."/>
            <person name="Zhou L."/>
            <person name="Benahmed F."/>
            <person name="Forberger H."/>
            <person name="Halpin R."/>
            <person name="Mulligan S."/>
            <person name="Robinson J."/>
            <person name="White O."/>
            <person name="Rikihisa Y."/>
            <person name="Tettelin H."/>
        </authorList>
    </citation>
    <scope>NUCLEOTIDE SEQUENCE [LARGE SCALE GENOMIC DNA]</scope>
    <source>
        <strain>ATCC CRL-10679 / Arkansas</strain>
    </source>
</reference>
<accession>Q2GH50</accession>
<sequence length="211" mass="23801">MGQKSNPIGLRLKIINTWDSLWYANKDYTTKLHEDFLLRKFIKKAFYHASISKVVIARKVDVIMVNVYSAKPGVIIGKKGADIDKVKQQIVKMINNNIELNIIEVKKPELKAVLIAENIAQQLEKRISFRRAMKRSVQSCLKIGAKGIKVSCAGRLGGAEIARTEWYKEGSVPLHTFRANIDYGFSEAKTIYGIIGVKVWVYLGDTKSSNE</sequence>